<protein>
    <recommendedName>
        <fullName evidence="1">Iron-sulfur cluster insertion protein ErpA</fullName>
    </recommendedName>
</protein>
<feature type="chain" id="PRO_0000311515" description="Iron-sulfur cluster insertion protein ErpA">
    <location>
        <begin position="1"/>
        <end position="114"/>
    </location>
</feature>
<feature type="binding site" evidence="1">
    <location>
        <position position="42"/>
    </location>
    <ligand>
        <name>iron-sulfur cluster</name>
        <dbReference type="ChEBI" id="CHEBI:30408"/>
    </ligand>
</feature>
<feature type="binding site" evidence="1">
    <location>
        <position position="106"/>
    </location>
    <ligand>
        <name>iron-sulfur cluster</name>
        <dbReference type="ChEBI" id="CHEBI:30408"/>
    </ligand>
</feature>
<feature type="binding site" evidence="1">
    <location>
        <position position="108"/>
    </location>
    <ligand>
        <name>iron-sulfur cluster</name>
        <dbReference type="ChEBI" id="CHEBI:30408"/>
    </ligand>
</feature>
<comment type="function">
    <text evidence="1">Required for insertion of 4Fe-4S clusters for at least IspG.</text>
</comment>
<comment type="cofactor">
    <cofactor evidence="1">
        <name>iron-sulfur cluster</name>
        <dbReference type="ChEBI" id="CHEBI:30408"/>
    </cofactor>
    <text evidence="1">Binds 1 iron-sulfur cluster per subunit.</text>
</comment>
<comment type="subunit">
    <text evidence="1">Homodimer.</text>
</comment>
<comment type="similarity">
    <text evidence="1">Belongs to the HesB/IscA family.</text>
</comment>
<accession>Q9CNH3</accession>
<keyword id="KW-0408">Iron</keyword>
<keyword id="KW-0411">Iron-sulfur</keyword>
<keyword id="KW-0479">Metal-binding</keyword>
<keyword id="KW-1185">Reference proteome</keyword>
<name>ERPA_PASMU</name>
<organism>
    <name type="scientific">Pasteurella multocida (strain Pm70)</name>
    <dbReference type="NCBI Taxonomy" id="272843"/>
    <lineage>
        <taxon>Bacteria</taxon>
        <taxon>Pseudomonadati</taxon>
        <taxon>Pseudomonadota</taxon>
        <taxon>Gammaproteobacteria</taxon>
        <taxon>Pasteurellales</taxon>
        <taxon>Pasteurellaceae</taxon>
        <taxon>Pasteurella</taxon>
    </lineage>
</organism>
<dbReference type="EMBL" id="AE004439">
    <property type="protein sequence ID" value="AAK02542.1"/>
    <property type="molecule type" value="Genomic_DNA"/>
</dbReference>
<dbReference type="SMR" id="Q9CNH3"/>
<dbReference type="STRING" id="272843.PM0458"/>
<dbReference type="EnsemblBacteria" id="AAK02542">
    <property type="protein sequence ID" value="AAK02542"/>
    <property type="gene ID" value="PM0458"/>
</dbReference>
<dbReference type="KEGG" id="pmu:PM0458"/>
<dbReference type="HOGENOM" id="CLU_069054_5_3_6"/>
<dbReference type="Proteomes" id="UP000000809">
    <property type="component" value="Chromosome"/>
</dbReference>
<dbReference type="GO" id="GO:0005829">
    <property type="term" value="C:cytosol"/>
    <property type="evidence" value="ECO:0007669"/>
    <property type="project" value="TreeGrafter"/>
</dbReference>
<dbReference type="GO" id="GO:0051537">
    <property type="term" value="F:2 iron, 2 sulfur cluster binding"/>
    <property type="evidence" value="ECO:0007669"/>
    <property type="project" value="TreeGrafter"/>
</dbReference>
<dbReference type="GO" id="GO:0051539">
    <property type="term" value="F:4 iron, 4 sulfur cluster binding"/>
    <property type="evidence" value="ECO:0007669"/>
    <property type="project" value="TreeGrafter"/>
</dbReference>
<dbReference type="GO" id="GO:0005506">
    <property type="term" value="F:iron ion binding"/>
    <property type="evidence" value="ECO:0007669"/>
    <property type="project" value="UniProtKB-UniRule"/>
</dbReference>
<dbReference type="GO" id="GO:0016226">
    <property type="term" value="P:iron-sulfur cluster assembly"/>
    <property type="evidence" value="ECO:0007669"/>
    <property type="project" value="UniProtKB-UniRule"/>
</dbReference>
<dbReference type="FunFam" id="2.60.300.12:FF:000002">
    <property type="entry name" value="Iron-sulfur cluster insertion protein ErpA"/>
    <property type="match status" value="1"/>
</dbReference>
<dbReference type="Gene3D" id="2.60.300.12">
    <property type="entry name" value="HesB-like domain"/>
    <property type="match status" value="1"/>
</dbReference>
<dbReference type="HAMAP" id="MF_01380">
    <property type="entry name" value="Fe_S_insert_ErpA"/>
    <property type="match status" value="1"/>
</dbReference>
<dbReference type="InterPro" id="IPR000361">
    <property type="entry name" value="FeS_biogenesis"/>
</dbReference>
<dbReference type="InterPro" id="IPR016092">
    <property type="entry name" value="FeS_cluster_insertion"/>
</dbReference>
<dbReference type="InterPro" id="IPR017870">
    <property type="entry name" value="FeS_cluster_insertion_CS"/>
</dbReference>
<dbReference type="InterPro" id="IPR023063">
    <property type="entry name" value="FeS_cluster_insertion_RrpA"/>
</dbReference>
<dbReference type="InterPro" id="IPR035903">
    <property type="entry name" value="HesB-like_dom_sf"/>
</dbReference>
<dbReference type="NCBIfam" id="TIGR00049">
    <property type="entry name" value="iron-sulfur cluster assembly accessory protein"/>
    <property type="match status" value="1"/>
</dbReference>
<dbReference type="NCBIfam" id="NF010147">
    <property type="entry name" value="PRK13623.1"/>
    <property type="match status" value="1"/>
</dbReference>
<dbReference type="PANTHER" id="PTHR43011">
    <property type="entry name" value="IRON-SULFUR CLUSTER ASSEMBLY 2 HOMOLOG, MITOCHONDRIAL"/>
    <property type="match status" value="1"/>
</dbReference>
<dbReference type="PANTHER" id="PTHR43011:SF1">
    <property type="entry name" value="IRON-SULFUR CLUSTER ASSEMBLY 2 HOMOLOG, MITOCHONDRIAL"/>
    <property type="match status" value="1"/>
</dbReference>
<dbReference type="Pfam" id="PF01521">
    <property type="entry name" value="Fe-S_biosyn"/>
    <property type="match status" value="1"/>
</dbReference>
<dbReference type="SUPFAM" id="SSF89360">
    <property type="entry name" value="HesB-like domain"/>
    <property type="match status" value="1"/>
</dbReference>
<dbReference type="PROSITE" id="PS01152">
    <property type="entry name" value="HESB"/>
    <property type="match status" value="1"/>
</dbReference>
<reference key="1">
    <citation type="journal article" date="2001" name="Proc. Natl. Acad. Sci. U.S.A.">
        <title>Complete genomic sequence of Pasteurella multocida Pm70.</title>
        <authorList>
            <person name="May B.J."/>
            <person name="Zhang Q."/>
            <person name="Li L.L."/>
            <person name="Paustian M.L."/>
            <person name="Whittam T.S."/>
            <person name="Kapur V."/>
        </authorList>
    </citation>
    <scope>NUCLEOTIDE SEQUENCE [LARGE SCALE GENOMIC DNA]</scope>
    <source>
        <strain>Pm70</strain>
    </source>
</reference>
<sequence>MMTEISVPLIFTDAAANKVKALISEEENPNLKLRVYITGGGCSGFQYGFTFDEKVNDGDLTIEKSGVHLVIDPMSLQYLIGGTVDYTEGLEGSRFVVNNPNASTTCGCGSSFSI</sequence>
<gene>
    <name evidence="1" type="primary">erpA</name>
    <name type="ordered locus">PM0458</name>
</gene>
<proteinExistence type="inferred from homology"/>
<evidence type="ECO:0000255" key="1">
    <source>
        <dbReference type="HAMAP-Rule" id="MF_01380"/>
    </source>
</evidence>